<proteinExistence type="inferred from homology"/>
<accession>C1CAL7</accession>
<protein>
    <recommendedName>
        <fullName evidence="1">Large ribosomal subunit protein uL22</fullName>
    </recommendedName>
    <alternativeName>
        <fullName evidence="2">50S ribosomal protein L22</fullName>
    </alternativeName>
</protein>
<comment type="function">
    <text evidence="1">This protein binds specifically to 23S rRNA; its binding is stimulated by other ribosomal proteins, e.g. L4, L17, and L20. It is important during the early stages of 50S assembly. It makes multiple contacts with different domains of the 23S rRNA in the assembled 50S subunit and ribosome (By similarity).</text>
</comment>
<comment type="function">
    <text evidence="1">The globular domain of the protein is located near the polypeptide exit tunnel on the outside of the subunit, while an extended beta-hairpin is found that lines the wall of the exit tunnel in the center of the 70S ribosome.</text>
</comment>
<comment type="subunit">
    <text evidence="1">Part of the 50S ribosomal subunit.</text>
</comment>
<comment type="similarity">
    <text evidence="1">Belongs to the universal ribosomal protein uL22 family.</text>
</comment>
<reference key="1">
    <citation type="journal article" date="2010" name="Genome Biol.">
        <title>Structure and dynamics of the pan-genome of Streptococcus pneumoniae and closely related species.</title>
        <authorList>
            <person name="Donati C."/>
            <person name="Hiller N.L."/>
            <person name="Tettelin H."/>
            <person name="Muzzi A."/>
            <person name="Croucher N.J."/>
            <person name="Angiuoli S.V."/>
            <person name="Oggioni M."/>
            <person name="Dunning Hotopp J.C."/>
            <person name="Hu F.Z."/>
            <person name="Riley D.R."/>
            <person name="Covacci A."/>
            <person name="Mitchell T.J."/>
            <person name="Bentley S.D."/>
            <person name="Kilian M."/>
            <person name="Ehrlich G.D."/>
            <person name="Rappuoli R."/>
            <person name="Moxon E.R."/>
            <person name="Masignani V."/>
        </authorList>
    </citation>
    <scope>NUCLEOTIDE SEQUENCE [LARGE SCALE GENOMIC DNA]</scope>
    <source>
        <strain>70585</strain>
    </source>
</reference>
<feature type="chain" id="PRO_1000166085" description="Large ribosomal subunit protein uL22">
    <location>
        <begin position="1"/>
        <end position="114"/>
    </location>
</feature>
<sequence length="114" mass="12200">MAEITSAKAMARTVRVSPRKSRLVLDNIRGKSVADAIAILTFTPNKAAEIILKVLNSAVANAENNFGLDKANLVVSEAFANEGPTMKRFRPRAKGSASPINKRTAHITVAVAEK</sequence>
<evidence type="ECO:0000255" key="1">
    <source>
        <dbReference type="HAMAP-Rule" id="MF_01331"/>
    </source>
</evidence>
<evidence type="ECO:0000305" key="2"/>
<name>RL22_STRP7</name>
<keyword id="KW-0687">Ribonucleoprotein</keyword>
<keyword id="KW-0689">Ribosomal protein</keyword>
<keyword id="KW-0694">RNA-binding</keyword>
<keyword id="KW-0699">rRNA-binding</keyword>
<gene>
    <name evidence="1" type="primary">rplV</name>
    <name type="ordered locus">SP70585_0270</name>
</gene>
<dbReference type="EMBL" id="CP000918">
    <property type="protein sequence ID" value="ACO16742.1"/>
    <property type="molecule type" value="Genomic_DNA"/>
</dbReference>
<dbReference type="RefSeq" id="WP_000818137.1">
    <property type="nucleotide sequence ID" value="NC_012468.1"/>
</dbReference>
<dbReference type="SMR" id="C1CAL7"/>
<dbReference type="GeneID" id="93738962"/>
<dbReference type="KEGG" id="snm:SP70585_0270"/>
<dbReference type="HOGENOM" id="CLU_083987_3_3_9"/>
<dbReference type="Proteomes" id="UP000002211">
    <property type="component" value="Chromosome"/>
</dbReference>
<dbReference type="GO" id="GO:0022625">
    <property type="term" value="C:cytosolic large ribosomal subunit"/>
    <property type="evidence" value="ECO:0007669"/>
    <property type="project" value="TreeGrafter"/>
</dbReference>
<dbReference type="GO" id="GO:0019843">
    <property type="term" value="F:rRNA binding"/>
    <property type="evidence" value="ECO:0007669"/>
    <property type="project" value="UniProtKB-UniRule"/>
</dbReference>
<dbReference type="GO" id="GO:0003735">
    <property type="term" value="F:structural constituent of ribosome"/>
    <property type="evidence" value="ECO:0007669"/>
    <property type="project" value="InterPro"/>
</dbReference>
<dbReference type="GO" id="GO:0006412">
    <property type="term" value="P:translation"/>
    <property type="evidence" value="ECO:0007669"/>
    <property type="project" value="UniProtKB-UniRule"/>
</dbReference>
<dbReference type="CDD" id="cd00336">
    <property type="entry name" value="Ribosomal_L22"/>
    <property type="match status" value="1"/>
</dbReference>
<dbReference type="FunFam" id="3.90.470.10:FF:000001">
    <property type="entry name" value="50S ribosomal protein L22"/>
    <property type="match status" value="1"/>
</dbReference>
<dbReference type="Gene3D" id="3.90.470.10">
    <property type="entry name" value="Ribosomal protein L22/L17"/>
    <property type="match status" value="1"/>
</dbReference>
<dbReference type="HAMAP" id="MF_01331_B">
    <property type="entry name" value="Ribosomal_uL22_B"/>
    <property type="match status" value="1"/>
</dbReference>
<dbReference type="InterPro" id="IPR001063">
    <property type="entry name" value="Ribosomal_uL22"/>
</dbReference>
<dbReference type="InterPro" id="IPR005727">
    <property type="entry name" value="Ribosomal_uL22_bac/chlpt-type"/>
</dbReference>
<dbReference type="InterPro" id="IPR047867">
    <property type="entry name" value="Ribosomal_uL22_bac/org-type"/>
</dbReference>
<dbReference type="InterPro" id="IPR018260">
    <property type="entry name" value="Ribosomal_uL22_CS"/>
</dbReference>
<dbReference type="InterPro" id="IPR036394">
    <property type="entry name" value="Ribosomal_uL22_sf"/>
</dbReference>
<dbReference type="NCBIfam" id="TIGR01044">
    <property type="entry name" value="rplV_bact"/>
    <property type="match status" value="1"/>
</dbReference>
<dbReference type="PANTHER" id="PTHR13501">
    <property type="entry name" value="CHLOROPLAST 50S RIBOSOMAL PROTEIN L22-RELATED"/>
    <property type="match status" value="1"/>
</dbReference>
<dbReference type="PANTHER" id="PTHR13501:SF8">
    <property type="entry name" value="LARGE RIBOSOMAL SUBUNIT PROTEIN UL22M"/>
    <property type="match status" value="1"/>
</dbReference>
<dbReference type="Pfam" id="PF00237">
    <property type="entry name" value="Ribosomal_L22"/>
    <property type="match status" value="1"/>
</dbReference>
<dbReference type="SUPFAM" id="SSF54843">
    <property type="entry name" value="Ribosomal protein L22"/>
    <property type="match status" value="1"/>
</dbReference>
<dbReference type="PROSITE" id="PS00464">
    <property type="entry name" value="RIBOSOMAL_L22"/>
    <property type="match status" value="1"/>
</dbReference>
<organism>
    <name type="scientific">Streptococcus pneumoniae (strain 70585)</name>
    <dbReference type="NCBI Taxonomy" id="488221"/>
    <lineage>
        <taxon>Bacteria</taxon>
        <taxon>Bacillati</taxon>
        <taxon>Bacillota</taxon>
        <taxon>Bacilli</taxon>
        <taxon>Lactobacillales</taxon>
        <taxon>Streptococcaceae</taxon>
        <taxon>Streptococcus</taxon>
    </lineage>
</organism>